<protein>
    <recommendedName>
        <fullName>Pro-opiomelanocortin</fullName>
        <shortName>POMC</shortName>
    </recommendedName>
    <alternativeName>
        <fullName>Corticotropin-lipotropin</fullName>
    </alternativeName>
    <component>
        <recommendedName>
            <fullName>Corticotropin</fullName>
        </recommendedName>
        <alternativeName>
            <fullName>Adrenocorticotropic hormone</fullName>
            <shortName>ACTH</shortName>
        </alternativeName>
    </component>
    <component>
        <recommendedName>
            <fullName>Melanocyte-stimulating hormone alpha</fullName>
            <shortName>Alpha-MSH</shortName>
        </recommendedName>
        <alternativeName>
            <fullName>Melanotropin alpha</fullName>
        </alternativeName>
    </component>
    <component>
        <recommendedName>
            <fullName>Corticotropin-like intermediary peptide</fullName>
            <shortName>CLIP</shortName>
        </recommendedName>
    </component>
    <component>
        <recommendedName>
            <fullName>Lipotropin beta</fullName>
        </recommendedName>
        <alternativeName>
            <fullName>Beta-LPH</fullName>
        </alternativeName>
    </component>
    <component>
        <recommendedName>
            <fullName>Lipotropin gamma</fullName>
        </recommendedName>
        <alternativeName>
            <fullName>Gamma-LPH</fullName>
        </alternativeName>
    </component>
    <component>
        <recommendedName>
            <fullName>Melanocyte-stimulating hormone beta</fullName>
            <shortName>Beta-MSH</shortName>
        </recommendedName>
        <alternativeName>
            <fullName>Melanotropin beta</fullName>
        </alternativeName>
    </component>
    <component>
        <recommendedName>
            <fullName>Beta-endorphin</fullName>
        </recommendedName>
    </component>
    <component>
        <recommendedName>
            <fullName>Met-enkephalin</fullName>
        </recommendedName>
    </component>
</protein>
<name>COLI_NEOVI</name>
<reference key="1">
    <citation type="journal article" date="1988" name="Genomics">
        <title>The mink proopiomelanocortin gene: characterization of cDNA and chromosomal localization.</title>
        <authorList>
            <person name="Khlebodarova T.M."/>
            <person name="Karasik G.I."/>
            <person name="Matveeva N.M."/>
            <person name="Serov O.L."/>
            <person name="Golovin S.Y."/>
            <person name="Bondar A.A."/>
            <person name="Karginov V.A."/>
            <person name="Morozov I.S."/>
            <person name="Zelenin S.M."/>
            <person name="Mertvetsov N.P."/>
        </authorList>
    </citation>
    <scope>NUCLEOTIDE SEQUENCE [MRNA]</scope>
</reference>
<reference key="2">
    <citation type="journal article" date="1988" name="Bioorg. Khim.">
        <title>Synthesis, cloning and primary structure of cDNA for proopiomelanocortin from the pituitary gland of the mink (Mustella vison).</title>
        <authorList>
            <person name="Golovin S.Y."/>
            <person name="Bondar A.A."/>
            <person name="Karginov V.A."/>
            <person name="Morosov I.V."/>
            <person name="Zelenin S.M."/>
            <person name="Popova V.C."/>
            <person name="Mertvetsov N.P."/>
        </authorList>
    </citation>
    <scope>NUCLEOTIDE SEQUENCE [MRNA]</scope>
</reference>
<keyword id="KW-0027">Amidation</keyword>
<keyword id="KW-0165">Cleavage on pair of basic residues</keyword>
<keyword id="KW-0257">Endorphin</keyword>
<keyword id="KW-0372">Hormone</keyword>
<keyword id="KW-0597">Phosphoprotein</keyword>
<keyword id="KW-1185">Reference proteome</keyword>
<keyword id="KW-0964">Secreted</keyword>
<proteinExistence type="evidence at transcript level"/>
<sequence>SEPGRREGKRSYSMEHFRWGKPVGKKRRPVKVYPNGAEDESAEAFPLEFKRELAGERPEPALGPEGAAEGMAALADLEYGLVAKAEVAEKKDDGPYKMEHFRWGSPGKDKRYGGFMTSEKSQTPLVTLFKNAIIKNAHKKGQ</sequence>
<evidence type="ECO:0000250" key="1"/>
<evidence type="ECO:0000250" key="2">
    <source>
        <dbReference type="UniProtKB" id="P01189"/>
    </source>
</evidence>
<evidence type="ECO:0000250" key="3">
    <source>
        <dbReference type="UniProtKB" id="P01193"/>
    </source>
</evidence>
<evidence type="ECO:0000305" key="4"/>
<dbReference type="EMBL" id="J03039">
    <property type="protein sequence ID" value="AAA30967.1"/>
    <property type="molecule type" value="mRNA"/>
</dbReference>
<dbReference type="PIR" id="A29976">
    <property type="entry name" value="A29976"/>
</dbReference>
<dbReference type="SMR" id="P11280"/>
<dbReference type="Proteomes" id="UP000694425">
    <property type="component" value="Unplaced"/>
</dbReference>
<dbReference type="GO" id="GO:0005615">
    <property type="term" value="C:extracellular space"/>
    <property type="evidence" value="ECO:0007669"/>
    <property type="project" value="TreeGrafter"/>
</dbReference>
<dbReference type="GO" id="GO:0030141">
    <property type="term" value="C:secretory granule"/>
    <property type="evidence" value="ECO:0007669"/>
    <property type="project" value="TreeGrafter"/>
</dbReference>
<dbReference type="GO" id="GO:0001664">
    <property type="term" value="F:G protein-coupled receptor binding"/>
    <property type="evidence" value="ECO:0007669"/>
    <property type="project" value="TreeGrafter"/>
</dbReference>
<dbReference type="GO" id="GO:0005179">
    <property type="term" value="F:hormone activity"/>
    <property type="evidence" value="ECO:0007669"/>
    <property type="project" value="UniProtKB-KW"/>
</dbReference>
<dbReference type="GO" id="GO:0007218">
    <property type="term" value="P:neuropeptide signaling pathway"/>
    <property type="evidence" value="ECO:0007669"/>
    <property type="project" value="UniProtKB-KW"/>
</dbReference>
<dbReference type="GO" id="GO:2000852">
    <property type="term" value="P:regulation of corticosterone secretion"/>
    <property type="evidence" value="ECO:0007669"/>
    <property type="project" value="TreeGrafter"/>
</dbReference>
<dbReference type="InterPro" id="IPR013531">
    <property type="entry name" value="Mcrtin_ACTH_cent"/>
</dbReference>
<dbReference type="InterPro" id="IPR013532">
    <property type="entry name" value="Opioid_neuropept"/>
</dbReference>
<dbReference type="InterPro" id="IPR001941">
    <property type="entry name" value="PMOC"/>
</dbReference>
<dbReference type="InterPro" id="IPR050878">
    <property type="entry name" value="POMC-derived_peptides"/>
</dbReference>
<dbReference type="PANTHER" id="PTHR11416">
    <property type="entry name" value="PRO-OPIOMELANOCORTIN"/>
    <property type="match status" value="1"/>
</dbReference>
<dbReference type="PANTHER" id="PTHR11416:SF7">
    <property type="entry name" value="PRO-OPIOMELANOCORTIN"/>
    <property type="match status" value="1"/>
</dbReference>
<dbReference type="Pfam" id="PF00976">
    <property type="entry name" value="ACTH_domain"/>
    <property type="match status" value="2"/>
</dbReference>
<dbReference type="Pfam" id="PF08035">
    <property type="entry name" value="Op_neuropeptide"/>
    <property type="match status" value="1"/>
</dbReference>
<dbReference type="PRINTS" id="PR00383">
    <property type="entry name" value="MELANOCORTIN"/>
</dbReference>
<dbReference type="SMART" id="SM01363">
    <property type="entry name" value="ACTH_domain"/>
    <property type="match status" value="2"/>
</dbReference>
<dbReference type="SMART" id="SM01365">
    <property type="entry name" value="Op_neuropeptide"/>
    <property type="match status" value="1"/>
</dbReference>
<accession>P11280</accession>
<feature type="propeptide" id="PRO_0000045867">
    <location>
        <begin position="1" status="less than"/>
        <end position="8"/>
    </location>
</feature>
<feature type="peptide" id="PRO_0000025007" description="Corticotropin">
    <location>
        <begin position="11"/>
        <end position="49"/>
    </location>
</feature>
<feature type="peptide" id="PRO_0000025008" description="Melanocyte-stimulating hormone alpha">
    <location>
        <begin position="11"/>
        <end position="23"/>
    </location>
</feature>
<feature type="peptide" id="PRO_0000025009" description="Corticotropin-like intermediary peptide">
    <location>
        <begin position="29"/>
        <end position="49"/>
    </location>
</feature>
<feature type="peptide" id="PRO_0000025010" description="Lipotropin beta">
    <location>
        <begin position="52"/>
        <end position="142"/>
    </location>
</feature>
<feature type="peptide" id="PRO_0000025011" description="Lipotropin gamma">
    <location>
        <begin position="52"/>
        <end position="109"/>
    </location>
</feature>
<feature type="peptide" id="PRO_0000025012" description="Melanocyte-stimulating hormone beta">
    <location>
        <begin position="92"/>
        <end position="109"/>
    </location>
</feature>
<feature type="peptide" id="PRO_0000025013" description="Beta-endorphin">
    <location>
        <begin position="112"/>
        <end position="142"/>
    </location>
</feature>
<feature type="peptide" id="PRO_0000025014" description="Met-enkephalin">
    <location>
        <begin position="112"/>
        <end position="116"/>
    </location>
</feature>
<feature type="modified residue" description="Valine amide" evidence="1">
    <location>
        <position position="23"/>
    </location>
</feature>
<feature type="modified residue" description="Phosphoserine" evidence="2">
    <location>
        <position position="41"/>
    </location>
</feature>
<feature type="non-terminal residue">
    <location>
        <position position="1"/>
    </location>
</feature>
<organism>
    <name type="scientific">Neovison vison</name>
    <name type="common">American mink</name>
    <name type="synonym">Mustela vison</name>
    <dbReference type="NCBI Taxonomy" id="452646"/>
    <lineage>
        <taxon>Eukaryota</taxon>
        <taxon>Metazoa</taxon>
        <taxon>Chordata</taxon>
        <taxon>Craniata</taxon>
        <taxon>Vertebrata</taxon>
        <taxon>Euteleostomi</taxon>
        <taxon>Mammalia</taxon>
        <taxon>Eutheria</taxon>
        <taxon>Laurasiatheria</taxon>
        <taxon>Carnivora</taxon>
        <taxon>Caniformia</taxon>
        <taxon>Musteloidea</taxon>
        <taxon>Mustelidae</taxon>
        <taxon>Mustelinae</taxon>
        <taxon>Neogale</taxon>
    </lineage>
</organism>
<gene>
    <name type="primary">POMC</name>
</gene>
<comment type="function">
    <molecule>Corticotropin</molecule>
    <text>Stimulates the adrenal glands to release cortisol.</text>
</comment>
<comment type="function">
    <molecule>Melanocyte-stimulating hormone alpha</molecule>
    <text>Anorexigenic peptide. Increases the pigmentation of skin by increasing melanin production in melanocytes.</text>
</comment>
<comment type="function">
    <molecule>Melanocyte-stimulating hormone beta</molecule>
    <text>Increases the pigmentation of skin by increasing melanin production in melanocytes.</text>
</comment>
<comment type="function">
    <molecule>Beta-endorphin</molecule>
    <text>Endogenous orexigenic opiate.</text>
</comment>
<comment type="function">
    <molecule>Met-enkephalin</molecule>
    <text>Endogenous opiate.</text>
</comment>
<comment type="subcellular location">
    <subcellularLocation>
        <location evidence="3">Secreted</location>
    </subcellularLocation>
    <text evidence="3">Melanocyte-stimulating hormone alpha and beta-endorphin are stored in separate granules in hypothalamic POMC neurons, suggesting that secretion may be under the control of different regulatory mechanisms.</text>
</comment>
<comment type="tissue specificity">
    <text>ACTH and MSH are produced by the pituitary gland.</text>
</comment>
<comment type="PTM">
    <text>Specific enzymatic cleavages at paired basic residues yield the different active peptides.</text>
</comment>
<comment type="similarity">
    <text evidence="4">Belongs to the POMC family.</text>
</comment>